<accession>Q6NYX6</accession>
<organism>
    <name type="scientific">Danio rerio</name>
    <name type="common">Zebrafish</name>
    <name type="synonym">Brachydanio rerio</name>
    <dbReference type="NCBI Taxonomy" id="7955"/>
    <lineage>
        <taxon>Eukaryota</taxon>
        <taxon>Metazoa</taxon>
        <taxon>Chordata</taxon>
        <taxon>Craniata</taxon>
        <taxon>Vertebrata</taxon>
        <taxon>Euteleostomi</taxon>
        <taxon>Actinopterygii</taxon>
        <taxon>Neopterygii</taxon>
        <taxon>Teleostei</taxon>
        <taxon>Ostariophysi</taxon>
        <taxon>Cypriniformes</taxon>
        <taxon>Danionidae</taxon>
        <taxon>Danioninae</taxon>
        <taxon>Danio</taxon>
    </lineage>
</organism>
<protein>
    <recommendedName>
        <fullName>Cyclin-F</fullName>
    </recommendedName>
</protein>
<feature type="chain" id="PRO_0000398636" description="Cyclin-F">
    <location>
        <begin position="1"/>
        <end position="764"/>
    </location>
</feature>
<feature type="domain" description="F-box" evidence="3">
    <location>
        <begin position="28"/>
        <end position="75"/>
    </location>
</feature>
<feature type="domain" description="Cyclin N-terminal" evidence="2">
    <location>
        <begin position="307"/>
        <end position="404"/>
    </location>
</feature>
<feature type="region of interest" description="PEST">
    <location>
        <begin position="583"/>
        <end position="738"/>
    </location>
</feature>
<feature type="region of interest" description="Disordered" evidence="4">
    <location>
        <begin position="662"/>
        <end position="754"/>
    </location>
</feature>
<feature type="short sequence motif" description="Nuclear localization signal 1" evidence="1">
    <location>
        <begin position="19"/>
        <end position="27"/>
    </location>
</feature>
<feature type="short sequence motif" description="D box 1" evidence="1">
    <location>
        <begin position="309"/>
        <end position="312"/>
    </location>
</feature>
<feature type="short sequence motif" description="Nuclear localization signal 2" evidence="1">
    <location>
        <begin position="570"/>
        <end position="575"/>
    </location>
</feature>
<feature type="compositionally biased region" description="Low complexity" evidence="4">
    <location>
        <begin position="682"/>
        <end position="692"/>
    </location>
</feature>
<feature type="compositionally biased region" description="Polar residues" evidence="4">
    <location>
        <begin position="702"/>
        <end position="722"/>
    </location>
</feature>
<feature type="compositionally biased region" description="Basic residues" evidence="4">
    <location>
        <begin position="732"/>
        <end position="742"/>
    </location>
</feature>
<name>CCNF_DANRE</name>
<gene>
    <name type="primary">ccnf</name>
</gene>
<keyword id="KW-0131">Cell cycle</keyword>
<keyword id="KW-0132">Cell division</keyword>
<keyword id="KW-0195">Cyclin</keyword>
<keyword id="KW-0963">Cytoplasm</keyword>
<keyword id="KW-0206">Cytoskeleton</keyword>
<keyword id="KW-0498">Mitosis</keyword>
<keyword id="KW-0539">Nucleus</keyword>
<keyword id="KW-1185">Reference proteome</keyword>
<keyword id="KW-0833">Ubl conjugation pathway</keyword>
<comment type="function">
    <text evidence="1 5">Substrate recognition component of a SCF (SKP1-CUL1-F-box protein) E3 ubiquitin-protein ligase complex which mediates the ubiquitination and subsequent proteasomal degradation of target proteins (By similarity). The SCF(CCNF) E3 ubiquitin-protein ligase complex is an integral component of the ubiquitin proteasome system (UPS) and links proteasome degradation to the cell cycle (By similarity). Mediates the substrate recognition and the proteasomal degradation of various target proteins during G2 phase involved in the regulation of cell cycle progression and in the maintenance of genome stability (By similarity). May play a role in motor neuron development and axonal outgrowth (PubMed:28444311).</text>
</comment>
<comment type="subunit">
    <text evidence="1">Component of the SCF(CCNF) complex.</text>
</comment>
<comment type="subcellular location">
    <subcellularLocation>
        <location evidence="1">Nucleus</location>
    </subcellularLocation>
    <subcellularLocation>
        <location evidence="1">Cytoplasm</location>
        <location evidence="1">Perinuclear region</location>
    </subcellularLocation>
    <subcellularLocation>
        <location evidence="1">Cytoplasm</location>
        <location evidence="1">Cytoskeleton</location>
        <location evidence="1">Microtubule organizing center</location>
        <location evidence="1">Centrosome</location>
        <location evidence="1">Centriole</location>
    </subcellularLocation>
    <text evidence="1">Localization in the centrosome is rare in S phase cells and increases in G2 cells, Localizes on both the mother and daughter centrioles. Localizes to the nucleus in G2 phase.</text>
</comment>
<comment type="tissue specificity">
    <text evidence="5">Expressed in the brain.</text>
</comment>
<comment type="developmental stage">
    <text evidence="5">Initially ubiquitous expression at 12 hours post-fertilization (hpf), then strongly expressed in the central nervous system by 48 hpf (PubMed:28444311). Strongly expressed in the brain up to 5 days post-fertilization (dpf) (PubMed:28444311). Ongoing expression in whole brain tissue beyond 5 dpf into adulthood (PubMed:28444311).</text>
</comment>
<comment type="domain">
    <text evidence="1">The nuclear localization signals mediate the localization to the nucleus.</text>
</comment>
<comment type="domain">
    <text evidence="1">The D box motifs (amino acid sequence RxxL) are involved in substrate binding, and may be ubiquitinated.</text>
</comment>
<comment type="similarity">
    <text evidence="6">Belongs to the cyclin family. Cyclin AB subfamily.</text>
</comment>
<dbReference type="EMBL" id="BC066425">
    <property type="protein sequence ID" value="AAH66425.1"/>
    <property type="molecule type" value="mRNA"/>
</dbReference>
<dbReference type="RefSeq" id="NP_996931.1">
    <property type="nucleotide sequence ID" value="NM_207048.1"/>
</dbReference>
<dbReference type="SMR" id="Q6NYX6"/>
<dbReference type="FunCoup" id="Q6NYX6">
    <property type="interactions" value="2059"/>
</dbReference>
<dbReference type="STRING" id="7955.ENSDARP00000141877"/>
<dbReference type="PaxDb" id="7955-ENSDARP00000043143"/>
<dbReference type="Ensembl" id="ENSDART00000167177">
    <property type="protein sequence ID" value="ENSDARP00000141877"/>
    <property type="gene ID" value="ENSDARG00000105046"/>
</dbReference>
<dbReference type="GeneID" id="266981"/>
<dbReference type="KEGG" id="dre:266981"/>
<dbReference type="AGR" id="ZFIN:ZDB-GENE-021030-2"/>
<dbReference type="CTD" id="899"/>
<dbReference type="ZFIN" id="ZDB-GENE-021030-2">
    <property type="gene designation" value="ccnf"/>
</dbReference>
<dbReference type="eggNOG" id="KOG0654">
    <property type="taxonomic scope" value="Eukaryota"/>
</dbReference>
<dbReference type="HOGENOM" id="CLU_020348_0_0_1"/>
<dbReference type="InParanoid" id="Q6NYX6"/>
<dbReference type="OMA" id="HQAKKSC"/>
<dbReference type="OrthoDB" id="5590282at2759"/>
<dbReference type="PhylomeDB" id="Q6NYX6"/>
<dbReference type="TreeFam" id="TF101006"/>
<dbReference type="Reactome" id="R-DRE-8951664">
    <property type="pathway name" value="Neddylation"/>
</dbReference>
<dbReference type="Reactome" id="R-DRE-983168">
    <property type="pathway name" value="Antigen processing: Ubiquitination &amp; Proteasome degradation"/>
</dbReference>
<dbReference type="PRO" id="PR:Q6NYX6"/>
<dbReference type="Proteomes" id="UP000000437">
    <property type="component" value="Chromosome 3"/>
</dbReference>
<dbReference type="Bgee" id="ENSDARG00000105046">
    <property type="expression patterns" value="Expressed in testis and 39 other cell types or tissues"/>
</dbReference>
<dbReference type="GO" id="GO:0005814">
    <property type="term" value="C:centriole"/>
    <property type="evidence" value="ECO:0000250"/>
    <property type="project" value="UniProtKB"/>
</dbReference>
<dbReference type="GO" id="GO:0000307">
    <property type="term" value="C:cyclin-dependent protein kinase holoenzyme complex"/>
    <property type="evidence" value="ECO:0000318"/>
    <property type="project" value="GO_Central"/>
</dbReference>
<dbReference type="GO" id="GO:0005737">
    <property type="term" value="C:cytoplasm"/>
    <property type="evidence" value="ECO:0000318"/>
    <property type="project" value="GO_Central"/>
</dbReference>
<dbReference type="GO" id="GO:0005815">
    <property type="term" value="C:microtubule organizing center"/>
    <property type="evidence" value="ECO:0000318"/>
    <property type="project" value="GO_Central"/>
</dbReference>
<dbReference type="GO" id="GO:0005634">
    <property type="term" value="C:nucleus"/>
    <property type="evidence" value="ECO:0000250"/>
    <property type="project" value="UniProtKB"/>
</dbReference>
<dbReference type="GO" id="GO:0048471">
    <property type="term" value="C:perinuclear region of cytoplasm"/>
    <property type="evidence" value="ECO:0007669"/>
    <property type="project" value="UniProtKB-SubCell"/>
</dbReference>
<dbReference type="GO" id="GO:0019005">
    <property type="term" value="C:SCF ubiquitin ligase complex"/>
    <property type="evidence" value="ECO:0000250"/>
    <property type="project" value="UniProtKB"/>
</dbReference>
<dbReference type="GO" id="GO:0016538">
    <property type="term" value="F:cyclin-dependent protein serine/threonine kinase regulator activity"/>
    <property type="evidence" value="ECO:0000318"/>
    <property type="project" value="GO_Central"/>
</dbReference>
<dbReference type="GO" id="GO:0051301">
    <property type="term" value="P:cell division"/>
    <property type="evidence" value="ECO:0007669"/>
    <property type="project" value="UniProtKB-KW"/>
</dbReference>
<dbReference type="GO" id="GO:0000082">
    <property type="term" value="P:G1/S transition of mitotic cell cycle"/>
    <property type="evidence" value="ECO:0000318"/>
    <property type="project" value="GO_Central"/>
</dbReference>
<dbReference type="GO" id="GO:0010826">
    <property type="term" value="P:negative regulation of centrosome duplication"/>
    <property type="evidence" value="ECO:0000250"/>
    <property type="project" value="UniProtKB"/>
</dbReference>
<dbReference type="GO" id="GO:0016567">
    <property type="term" value="P:protein ubiquitination"/>
    <property type="evidence" value="ECO:0000250"/>
    <property type="project" value="UniProtKB"/>
</dbReference>
<dbReference type="GO" id="GO:0031146">
    <property type="term" value="P:SCF-dependent proteasomal ubiquitin-dependent protein catabolic process"/>
    <property type="evidence" value="ECO:0000250"/>
    <property type="project" value="UniProtKB"/>
</dbReference>
<dbReference type="CDD" id="cd20521">
    <property type="entry name" value="CYCLIN_CCNF_rpt1"/>
    <property type="match status" value="1"/>
</dbReference>
<dbReference type="CDD" id="cd20522">
    <property type="entry name" value="CYCLIN_CCNF_rpt2"/>
    <property type="match status" value="1"/>
</dbReference>
<dbReference type="CDD" id="cd22082">
    <property type="entry name" value="F-box_FBXO1"/>
    <property type="match status" value="1"/>
</dbReference>
<dbReference type="FunFam" id="1.10.472.10:FF:000038">
    <property type="entry name" value="Cyclin F"/>
    <property type="match status" value="1"/>
</dbReference>
<dbReference type="FunFam" id="1.10.472.10:FF:000055">
    <property type="entry name" value="Cyclin F"/>
    <property type="match status" value="1"/>
</dbReference>
<dbReference type="Gene3D" id="1.10.472.10">
    <property type="entry name" value="Cyclin-like"/>
    <property type="match status" value="2"/>
</dbReference>
<dbReference type="InterPro" id="IPR039361">
    <property type="entry name" value="Cyclin"/>
</dbReference>
<dbReference type="InterPro" id="IPR013763">
    <property type="entry name" value="Cyclin-like_dom"/>
</dbReference>
<dbReference type="InterPro" id="IPR036915">
    <property type="entry name" value="Cyclin-like_sf"/>
</dbReference>
<dbReference type="InterPro" id="IPR004367">
    <property type="entry name" value="Cyclin_C-dom"/>
</dbReference>
<dbReference type="InterPro" id="IPR006671">
    <property type="entry name" value="Cyclin_N"/>
</dbReference>
<dbReference type="InterPro" id="IPR048258">
    <property type="entry name" value="Cyclins_cyclin-box"/>
</dbReference>
<dbReference type="InterPro" id="IPR036047">
    <property type="entry name" value="F-box-like_dom_sf"/>
</dbReference>
<dbReference type="InterPro" id="IPR001810">
    <property type="entry name" value="F-box_dom"/>
</dbReference>
<dbReference type="PANTHER" id="PTHR10177">
    <property type="entry name" value="CYCLINS"/>
    <property type="match status" value="1"/>
</dbReference>
<dbReference type="Pfam" id="PF02984">
    <property type="entry name" value="Cyclin_C"/>
    <property type="match status" value="1"/>
</dbReference>
<dbReference type="Pfam" id="PF00134">
    <property type="entry name" value="Cyclin_N"/>
    <property type="match status" value="1"/>
</dbReference>
<dbReference type="Pfam" id="PF12937">
    <property type="entry name" value="F-box-like"/>
    <property type="match status" value="1"/>
</dbReference>
<dbReference type="SMART" id="SM00385">
    <property type="entry name" value="CYCLIN"/>
    <property type="match status" value="2"/>
</dbReference>
<dbReference type="SMART" id="SM01332">
    <property type="entry name" value="Cyclin_C"/>
    <property type="match status" value="1"/>
</dbReference>
<dbReference type="SMART" id="SM00256">
    <property type="entry name" value="FBOX"/>
    <property type="match status" value="1"/>
</dbReference>
<dbReference type="SUPFAM" id="SSF47954">
    <property type="entry name" value="Cyclin-like"/>
    <property type="match status" value="2"/>
</dbReference>
<dbReference type="SUPFAM" id="SSF81383">
    <property type="entry name" value="F-box domain"/>
    <property type="match status" value="1"/>
</dbReference>
<dbReference type="PROSITE" id="PS00292">
    <property type="entry name" value="CYCLINS"/>
    <property type="match status" value="1"/>
</dbReference>
<dbReference type="PROSITE" id="PS50181">
    <property type="entry name" value="FBOX"/>
    <property type="match status" value="1"/>
</dbReference>
<proteinExistence type="evidence at transcript level"/>
<evidence type="ECO:0000250" key="1">
    <source>
        <dbReference type="UniProtKB" id="P41002"/>
    </source>
</evidence>
<evidence type="ECO:0000255" key="2"/>
<evidence type="ECO:0000255" key="3">
    <source>
        <dbReference type="PROSITE-ProRule" id="PRU00080"/>
    </source>
</evidence>
<evidence type="ECO:0000256" key="4">
    <source>
        <dbReference type="SAM" id="MobiDB-lite"/>
    </source>
</evidence>
<evidence type="ECO:0000269" key="5">
    <source>
    </source>
</evidence>
<evidence type="ECO:0000305" key="6"/>
<reference key="1">
    <citation type="submission" date="2004-02" db="EMBL/GenBank/DDBJ databases">
        <authorList>
            <consortium name="NIH - Zebrafish Gene Collection (ZGC) project"/>
        </authorList>
    </citation>
    <scope>NUCLEOTIDE SEQUENCE [LARGE SCALE MRNA]</scope>
    <source>
        <tissue>Embryo</tissue>
    </source>
</reference>
<reference key="2">
    <citation type="journal article" date="2017" name="Hum. Mol. Genet.">
        <title>Expression of ALS/FTD-linked mutant CCNF in zebrafish leads to increased cell death in the spinal cord and an aberrant motor phenotype.</title>
        <authorList>
            <person name="Hogan A.L."/>
            <person name="Don E.K."/>
            <person name="Rayner S.L."/>
            <person name="Lee A."/>
            <person name="Laird A.S."/>
            <person name="Watchon M."/>
            <person name="Winnick C."/>
            <person name="Tarr I.S."/>
            <person name="Morsch M."/>
            <person name="Fifita J.A."/>
            <person name="Gwee S.S.L."/>
            <person name="Formella I."/>
            <person name="Hortle E."/>
            <person name="Yuan K.C."/>
            <person name="Molloy M.P."/>
            <person name="Williams K.L."/>
            <person name="Nicholson G.A."/>
            <person name="Chung R.S."/>
            <person name="Blair I.P."/>
            <person name="Cole N.J."/>
        </authorList>
    </citation>
    <scope>FUNCTION</scope>
    <scope>TISSUE SPECIFICITY</scope>
    <scope>DEVELOPMENTAL STAGE</scope>
</reference>
<sequence>MKAGALHCRCAKCFSLPVRKRVRKRASAVSLLSLPEELLVFVLQCLSAEDLLSVRAVHSHLCDIIDTNASIWARVSFKDRWPAPDTVWLFERAAEKGNFEAAVKLGIAYLYNEGPLLSEEGRADLCGRMASRYLSLSESLRSPQAEPFIWLFIRPPWSVSGSCCKAVVFDRLQAECQTSPGRKGTLLYCLARVLQLFDDEEKRDEAELMLKESSRCGSLQSSYLLWAISRASSTADPGRYLQCMRTLRDYAARGCWEAQLAFVKSCGSANPLGLEPRACSELVSQFFQTGPSALRYQPHLQGQDITTKRYILVDWLVEVTTTKDFSSQVLHVTISCVDRYLHLRSVPKAQLQLLGIACMVICTRFISKEILTIREAVWLTDNTYQYEDLVHMMGEVISVLDGKIRTPTVLDYGEVLLSLLPVERRTAHLFSYICELSLLCSPATVPGPARLASAILLLTRALHNYVPVWPVQLEENTGFSKQDLVSCALTLYIKCFGQDVPKDYRHVSLTGVKQRFEDDSYQQISKDTVMGFKELCHVLEVPEVEPQVEVSSTSGQITEMHTFLSSPTSSSKRRRADSMQAHRGAFVATPTAELSNQEETLLGDFLDWSLDTSCSGYEGDRESEGEKDGEISTMEVQMELPLDCADRQTHCCLLSSDDTSLCEEDEQEPPTGGSKPWTRHLSSSSTSSSSSSCGFCTDRHSSGYSSIQSFPSPTGSSALVSPQNPPGVPSQRIRRQVKRKNTAAHSAGEAEQEDDAANLAFLSF</sequence>